<reference key="1">
    <citation type="submission" date="1999-08" db="EMBL/GenBank/DDBJ databases">
        <title>Identification of human homolog of rat lin-10.</title>
        <authorList>
            <person name="Lee Y.M."/>
            <person name="Kim W."/>
        </authorList>
    </citation>
    <scope>NUCLEOTIDE SEQUENCE [MRNA] (ISOFORM 1)</scope>
</reference>
<reference key="2">
    <citation type="journal article" date="2004" name="Nat. Genet.">
        <title>Complete sequencing and characterization of 21,243 full-length human cDNAs.</title>
        <authorList>
            <person name="Ota T."/>
            <person name="Suzuki Y."/>
            <person name="Nishikawa T."/>
            <person name="Otsuki T."/>
            <person name="Sugiyama T."/>
            <person name="Irie R."/>
            <person name="Wakamatsu A."/>
            <person name="Hayashi K."/>
            <person name="Sato H."/>
            <person name="Nagai K."/>
            <person name="Kimura K."/>
            <person name="Makita H."/>
            <person name="Sekine M."/>
            <person name="Obayashi M."/>
            <person name="Nishi T."/>
            <person name="Shibahara T."/>
            <person name="Tanaka T."/>
            <person name="Ishii S."/>
            <person name="Yamamoto J."/>
            <person name="Saito K."/>
            <person name="Kawai Y."/>
            <person name="Isono Y."/>
            <person name="Nakamura Y."/>
            <person name="Nagahari K."/>
            <person name="Murakami K."/>
            <person name="Yasuda T."/>
            <person name="Iwayanagi T."/>
            <person name="Wagatsuma M."/>
            <person name="Shiratori A."/>
            <person name="Sudo H."/>
            <person name="Hosoiri T."/>
            <person name="Kaku Y."/>
            <person name="Kodaira H."/>
            <person name="Kondo H."/>
            <person name="Sugawara M."/>
            <person name="Takahashi M."/>
            <person name="Kanda K."/>
            <person name="Yokoi T."/>
            <person name="Furuya T."/>
            <person name="Kikkawa E."/>
            <person name="Omura Y."/>
            <person name="Abe K."/>
            <person name="Kamihara K."/>
            <person name="Katsuta N."/>
            <person name="Sato K."/>
            <person name="Tanikawa M."/>
            <person name="Yamazaki M."/>
            <person name="Ninomiya K."/>
            <person name="Ishibashi T."/>
            <person name="Yamashita H."/>
            <person name="Murakawa K."/>
            <person name="Fujimori K."/>
            <person name="Tanai H."/>
            <person name="Kimata M."/>
            <person name="Watanabe M."/>
            <person name="Hiraoka S."/>
            <person name="Chiba Y."/>
            <person name="Ishida S."/>
            <person name="Ono Y."/>
            <person name="Takiguchi S."/>
            <person name="Watanabe S."/>
            <person name="Yosida M."/>
            <person name="Hotuta T."/>
            <person name="Kusano J."/>
            <person name="Kanehori K."/>
            <person name="Takahashi-Fujii A."/>
            <person name="Hara H."/>
            <person name="Tanase T.-O."/>
            <person name="Nomura Y."/>
            <person name="Togiya S."/>
            <person name="Komai F."/>
            <person name="Hara R."/>
            <person name="Takeuchi K."/>
            <person name="Arita M."/>
            <person name="Imose N."/>
            <person name="Musashino K."/>
            <person name="Yuuki H."/>
            <person name="Oshima A."/>
            <person name="Sasaki N."/>
            <person name="Aotsuka S."/>
            <person name="Yoshikawa Y."/>
            <person name="Matsunawa H."/>
            <person name="Ichihara T."/>
            <person name="Shiohata N."/>
            <person name="Sano S."/>
            <person name="Moriya S."/>
            <person name="Momiyama H."/>
            <person name="Satoh N."/>
            <person name="Takami S."/>
            <person name="Terashima Y."/>
            <person name="Suzuki O."/>
            <person name="Nakagawa S."/>
            <person name="Senoh A."/>
            <person name="Mizoguchi H."/>
            <person name="Goto Y."/>
            <person name="Shimizu F."/>
            <person name="Wakebe H."/>
            <person name="Hishigaki H."/>
            <person name="Watanabe T."/>
            <person name="Sugiyama A."/>
            <person name="Takemoto M."/>
            <person name="Kawakami B."/>
            <person name="Yamazaki M."/>
            <person name="Watanabe K."/>
            <person name="Kumagai A."/>
            <person name="Itakura S."/>
            <person name="Fukuzumi Y."/>
            <person name="Fujimori Y."/>
            <person name="Komiyama M."/>
            <person name="Tashiro H."/>
            <person name="Tanigami A."/>
            <person name="Fujiwara T."/>
            <person name="Ono T."/>
            <person name="Yamada K."/>
            <person name="Fujii Y."/>
            <person name="Ozaki K."/>
            <person name="Hirao M."/>
            <person name="Ohmori Y."/>
            <person name="Kawabata A."/>
            <person name="Hikiji T."/>
            <person name="Kobatake N."/>
            <person name="Inagaki H."/>
            <person name="Ikema Y."/>
            <person name="Okamoto S."/>
            <person name="Okitani R."/>
            <person name="Kawakami T."/>
            <person name="Noguchi S."/>
            <person name="Itoh T."/>
            <person name="Shigeta K."/>
            <person name="Senba T."/>
            <person name="Matsumura K."/>
            <person name="Nakajima Y."/>
            <person name="Mizuno T."/>
            <person name="Morinaga M."/>
            <person name="Sasaki M."/>
            <person name="Togashi T."/>
            <person name="Oyama M."/>
            <person name="Hata H."/>
            <person name="Watanabe M."/>
            <person name="Komatsu T."/>
            <person name="Mizushima-Sugano J."/>
            <person name="Satoh T."/>
            <person name="Shirai Y."/>
            <person name="Takahashi Y."/>
            <person name="Nakagawa K."/>
            <person name="Okumura K."/>
            <person name="Nagase T."/>
            <person name="Nomura N."/>
            <person name="Kikuchi H."/>
            <person name="Masuho Y."/>
            <person name="Yamashita R."/>
            <person name="Nakai K."/>
            <person name="Yada T."/>
            <person name="Nakamura Y."/>
            <person name="Ohara O."/>
            <person name="Isogai T."/>
            <person name="Sugano S."/>
        </authorList>
    </citation>
    <scope>NUCLEOTIDE SEQUENCE [LARGE SCALE MRNA] (ISOFORM 2)</scope>
    <source>
        <tissue>Embryo</tissue>
    </source>
</reference>
<reference key="3">
    <citation type="journal article" date="2004" name="Genome Res.">
        <title>The status, quality, and expansion of the NIH full-length cDNA project: the Mammalian Gene Collection (MGC).</title>
        <authorList>
            <consortium name="The MGC Project Team"/>
        </authorList>
    </citation>
    <scope>NUCLEOTIDE SEQUENCE [LARGE SCALE MRNA] (ISOFORM 1)</scope>
    <source>
        <tissue>Placenta</tissue>
    </source>
</reference>
<reference key="4">
    <citation type="journal article" date="2012" name="Proc. Natl. Acad. Sci. U.S.A.">
        <title>N-terminal acetylome analyses and functional insights of the N-terminal acetyltransferase NatB.</title>
        <authorList>
            <person name="Van Damme P."/>
            <person name="Lasa M."/>
            <person name="Polevoda B."/>
            <person name="Gazquez C."/>
            <person name="Elosegui-Artola A."/>
            <person name="Kim D.S."/>
            <person name="De Juan-Pardo E."/>
            <person name="Demeyer K."/>
            <person name="Hole K."/>
            <person name="Larrea E."/>
            <person name="Timmerman E."/>
            <person name="Prieto J."/>
            <person name="Arnesen T."/>
            <person name="Sherman F."/>
            <person name="Gevaert K."/>
            <person name="Aldabe R."/>
        </authorList>
    </citation>
    <scope>IDENTIFICATION BY MASS SPECTROMETRY [LARGE SCALE ANALYSIS]</scope>
</reference>
<reference key="5">
    <citation type="journal article" date="2013" name="J. Proteome Res.">
        <title>Toward a comprehensive characterization of a human cancer cell phosphoproteome.</title>
        <authorList>
            <person name="Zhou H."/>
            <person name="Di Palma S."/>
            <person name="Preisinger C."/>
            <person name="Peng M."/>
            <person name="Polat A.N."/>
            <person name="Heck A.J."/>
            <person name="Mohammed S."/>
        </authorList>
    </citation>
    <scope>IDENTIFICATION BY MASS SPECTROMETRY [LARGE SCALE ANALYSIS]</scope>
    <source>
        <tissue>Erythroleukemia</tissue>
    </source>
</reference>
<reference key="6">
    <citation type="journal article" date="2021" name="Autophagy">
        <title>Mammalian BCAS3 and C16orf70 associate with the phagophore assembly site in response to selective and non-selective autophagy.</title>
        <authorList>
            <person name="Kojima W."/>
            <person name="Yamano K."/>
            <person name="Kosako H."/>
            <person name="Imai K."/>
            <person name="Kikuchi R."/>
            <person name="Tanaka K."/>
            <person name="Matsuda N."/>
        </authorList>
    </citation>
    <scope>FUNCTION</scope>
    <scope>INTERACTION WITH BCAS3</scope>
    <scope>SUBCELLULAR LOCATION</scope>
</reference>
<feature type="chain" id="PRO_0000221083" description="Phagosome assembly factor 1">
    <location>
        <begin position="1"/>
        <end position="422"/>
    </location>
</feature>
<feature type="splice variant" id="VSP_026623" description="In isoform 2." evidence="2">
    <location>
        <begin position="1"/>
        <end position="22"/>
    </location>
</feature>
<feature type="splice variant" id="VSP_026624" description="In isoform 2." evidence="2">
    <original>G</original>
    <variation>GGKPSPSDSSGHQWQFIAINLPGSAIPPHFLESGSHRIVGLVLGCEGNILPLVFNLVGQFRNKPQGRCCQSLLPARLVYVSHFRCQSTMLFSSPPPPT</variation>
    <location>
        <position position="118"/>
    </location>
</feature>
<feature type="splice variant" id="VSP_026625" description="In isoform 2." evidence="2">
    <location>
        <begin position="184"/>
        <end position="422"/>
    </location>
</feature>
<organism>
    <name type="scientific">Homo sapiens</name>
    <name type="common">Human</name>
    <dbReference type="NCBI Taxonomy" id="9606"/>
    <lineage>
        <taxon>Eukaryota</taxon>
        <taxon>Metazoa</taxon>
        <taxon>Chordata</taxon>
        <taxon>Craniata</taxon>
        <taxon>Vertebrata</taxon>
        <taxon>Euteleostomi</taxon>
        <taxon>Mammalia</taxon>
        <taxon>Eutheria</taxon>
        <taxon>Euarchontoglires</taxon>
        <taxon>Primates</taxon>
        <taxon>Haplorrhini</taxon>
        <taxon>Catarrhini</taxon>
        <taxon>Hominidae</taxon>
        <taxon>Homo</taxon>
    </lineage>
</organism>
<sequence>MLDLEVVPERSLGNEQWEFTLGMPLAQAVAILQKHCRIIKNVQVLYSEQSPLSHDLILNLTQDGIKLMFDAFNQRLKVIEVCDLTKVKLKYCGVHFNSQAIAPTIEQIDQSFGATHPGVYNSAEQLFHLNFRGLSFSFQLDSWTEAPKYEPNFAHGLASLQIPHGATVKRMYIYSGNSLQDTKAPMMPLSCFLGNVYAESVDVLRDGTGPAGLRLRLLAAGCGPGLLADAKMRVFERSVYFGDSCQDVLSMLGSPHKVFYKSEDKMKIHSPSPHKQVPSKCNDYFFNYFTLGVDILFDANTHKVKKFVLHTNYPGHYNFNIYHRCEFKIPLAIKKENADGQTETCTTYSKWDNIQELLGHPVEKPVVLHRSSSPNNTNPFGSTFCFGLQRMIFEVMQNNHIASVTLYGPPRPGSHLRTAELP</sequence>
<keyword id="KW-0025">Alternative splicing</keyword>
<keyword id="KW-0963">Cytoplasm</keyword>
<keyword id="KW-1267">Proteomics identification</keyword>
<keyword id="KW-1185">Reference proteome</keyword>
<protein>
    <recommendedName>
        <fullName evidence="3">Phagosome assembly factor 1</fullName>
    </recommendedName>
</protein>
<gene>
    <name evidence="4" type="primary">PHAF1</name>
    <name type="synonym">C16orf6</name>
    <name type="synonym">C16orf70</name>
</gene>
<evidence type="ECO:0000269" key="1">
    <source>
    </source>
</evidence>
<evidence type="ECO:0000303" key="2">
    <source>
    </source>
</evidence>
<evidence type="ECO:0000305" key="3"/>
<evidence type="ECO:0000312" key="4">
    <source>
        <dbReference type="HGNC" id="HGNC:29564"/>
    </source>
</evidence>
<proteinExistence type="evidence at protein level"/>
<name>PHAF1_HUMAN</name>
<comment type="function">
    <text evidence="1">Plays a regulatory role in autophagic activity. In complex with BCAS3, associates with the autophagosome formation site during both non-selective and selective autophagy.</text>
</comment>
<comment type="subunit">
    <text evidence="1">Interacts with BCAS3; the interaction is requrired for the association with the phagophore.</text>
</comment>
<comment type="interaction">
    <interactant intactId="EBI-946080">
        <id>Q9BSU1</id>
    </interactant>
    <interactant intactId="EBI-946046">
        <id>P54252</id>
        <label>ATXN3</label>
    </interactant>
    <organismsDiffer>false</organismsDiffer>
    <experiments>4</experiments>
</comment>
<comment type="interaction">
    <interactant intactId="EBI-946080">
        <id>Q9BSU1</id>
    </interactant>
    <interactant intactId="EBI-6083685">
        <id>Q9H6U6</id>
        <label>BCAS3</label>
    </interactant>
    <organismsDiffer>false</organismsDiffer>
    <experiments>3</experiments>
</comment>
<comment type="interaction">
    <interactant intactId="EBI-946080">
        <id>Q9BSU1</id>
    </interactant>
    <interactant intactId="EBI-10307911">
        <id>Q9H6U6-2</id>
        <label>BCAS3</label>
    </interactant>
    <organismsDiffer>false</organismsDiffer>
    <experiments>3</experiments>
</comment>
<comment type="interaction">
    <interactant intactId="EBI-946080">
        <id>Q9BSU1</id>
    </interactant>
    <interactant intactId="EBI-11954144">
        <id>O43439-4</id>
        <label>CBFA2T2</label>
    </interactant>
    <organismsDiffer>false</organismsDiffer>
    <experiments>3</experiments>
</comment>
<comment type="interaction">
    <interactant intactId="EBI-946080">
        <id>Q9BSU1</id>
    </interactant>
    <interactant intactId="EBI-10171570">
        <id>Q68D86</id>
        <label>CCDC102B</label>
    </interactant>
    <organismsDiffer>false</organismsDiffer>
    <experiments>5</experiments>
</comment>
<comment type="interaction">
    <interactant intactId="EBI-946080">
        <id>Q9BSU1</id>
    </interactant>
    <interactant intactId="EBI-12183511">
        <id>O15442-2</id>
        <label>MPPED1</label>
    </interactant>
    <organismsDiffer>false</organismsDiffer>
    <experiments>3</experiments>
</comment>
<comment type="interaction">
    <interactant intactId="EBI-946080">
        <id>Q9BSU1</id>
    </interactant>
    <interactant intactId="EBI-10210114">
        <id>P48146</id>
        <label>NPBWR2</label>
    </interactant>
    <organismsDiffer>false</organismsDiffer>
    <experiments>3</experiments>
</comment>
<comment type="interaction">
    <interactant intactId="EBI-946080">
        <id>Q9BSU1</id>
    </interactant>
    <interactant intactId="EBI-1567866">
        <id>Q6MZQ0</id>
        <label>PRR5L</label>
    </interactant>
    <organismsDiffer>false</organismsDiffer>
    <experiments>3</experiments>
</comment>
<comment type="interaction">
    <interactant intactId="EBI-946080">
        <id>Q9BSU1</id>
    </interactant>
    <interactant intactId="EBI-74615">
        <id>Q9H0E2</id>
        <label>TOLLIP</label>
    </interactant>
    <organismsDiffer>false</organismsDiffer>
    <experiments>5</experiments>
</comment>
<comment type="interaction">
    <interactant intactId="EBI-946080">
        <id>Q9BSU1</id>
    </interactant>
    <interactant intactId="EBI-10687282">
        <id>Q9NRE2</id>
        <label>TSHZ2</label>
    </interactant>
    <organismsDiffer>false</organismsDiffer>
    <experiments>3</experiments>
</comment>
<comment type="subcellular location">
    <subcellularLocation>
        <location evidence="1">Cytoplasm</location>
    </subcellularLocation>
    <subcellularLocation>
        <location evidence="1">Preautophagosomal structure</location>
    </subcellularLocation>
    <text evidence="1">The BCAS3:PHAF1 complex is recruited to the preautophagosomal structures adjacent to the damaged mitochondria upon mitophagy in a PRKN-PINK1 dependent manner.</text>
</comment>
<comment type="alternative products">
    <event type="alternative splicing"/>
    <isoform>
        <id>Q9BSU1-1</id>
        <name>1</name>
        <sequence type="displayed"/>
    </isoform>
    <isoform>
        <id>Q9BSU1-2</id>
        <name>2</name>
        <sequence type="described" ref="VSP_026623 VSP_026624 VSP_026625"/>
    </isoform>
</comment>
<comment type="similarity">
    <text evidence="3">Belongs to the PHAF1 family.</text>
</comment>
<comment type="caution">
    <text evidence="3">Was originally (Ref.1) thought to be a lin-10 homolog.</text>
</comment>
<dbReference type="EMBL" id="AF176088">
    <property type="protein sequence ID" value="AAK96888.1"/>
    <property type="molecule type" value="mRNA"/>
</dbReference>
<dbReference type="EMBL" id="AK022138">
    <property type="protein sequence ID" value="BAB13968.1"/>
    <property type="molecule type" value="mRNA"/>
</dbReference>
<dbReference type="EMBL" id="BC004556">
    <property type="protein sequence ID" value="AAH04556.1"/>
    <property type="molecule type" value="mRNA"/>
</dbReference>
<dbReference type="CCDS" id="CCDS10828.1">
    <molecule id="Q9BSU1-1"/>
</dbReference>
<dbReference type="RefSeq" id="NP_001307469.1">
    <molecule id="Q9BSU1-1"/>
    <property type="nucleotide sequence ID" value="NM_001320540.2"/>
</dbReference>
<dbReference type="RefSeq" id="NP_001307470.1">
    <molecule id="Q9BSU1-1"/>
    <property type="nucleotide sequence ID" value="NM_001320541.2"/>
</dbReference>
<dbReference type="RefSeq" id="NP_001307471.1">
    <molecule id="Q9BSU1-1"/>
    <property type="nucleotide sequence ID" value="NM_001320542.2"/>
</dbReference>
<dbReference type="RefSeq" id="NP_001307472.1">
    <property type="nucleotide sequence ID" value="NM_001320543.1"/>
</dbReference>
<dbReference type="RefSeq" id="NP_079463.2">
    <molecule id="Q9BSU1-1"/>
    <property type="nucleotide sequence ID" value="NM_025187.4"/>
</dbReference>
<dbReference type="BioGRID" id="123204">
    <property type="interactions" value="48"/>
</dbReference>
<dbReference type="FunCoup" id="Q9BSU1">
    <property type="interactions" value="1003"/>
</dbReference>
<dbReference type="IntAct" id="Q9BSU1">
    <property type="interactions" value="37"/>
</dbReference>
<dbReference type="STRING" id="9606.ENSP00000219139"/>
<dbReference type="iPTMnet" id="Q9BSU1"/>
<dbReference type="PhosphoSitePlus" id="Q9BSU1"/>
<dbReference type="BioMuta" id="C16orf70"/>
<dbReference type="jPOST" id="Q9BSU1"/>
<dbReference type="MassIVE" id="Q9BSU1"/>
<dbReference type="PaxDb" id="9606-ENSP00000219139"/>
<dbReference type="PeptideAtlas" id="Q9BSU1"/>
<dbReference type="ProteomicsDB" id="78926">
    <molecule id="Q9BSU1-1"/>
</dbReference>
<dbReference type="ProteomicsDB" id="78927">
    <molecule id="Q9BSU1-2"/>
</dbReference>
<dbReference type="Pumba" id="Q9BSU1"/>
<dbReference type="Antibodypedia" id="29405">
    <property type="antibodies" value="46 antibodies from 18 providers"/>
</dbReference>
<dbReference type="DNASU" id="80262"/>
<dbReference type="Ensembl" id="ENST00000219139.8">
    <molecule id="Q9BSU1-1"/>
    <property type="protein sequence ID" value="ENSP00000219139.3"/>
    <property type="gene ID" value="ENSG00000125149.12"/>
</dbReference>
<dbReference type="Ensembl" id="ENST00000569600.5">
    <molecule id="Q9BSU1-1"/>
    <property type="protein sequence ID" value="ENSP00000455182.1"/>
    <property type="gene ID" value="ENSG00000125149.12"/>
</dbReference>
<dbReference type="GeneID" id="80262"/>
<dbReference type="KEGG" id="hsa:80262"/>
<dbReference type="MANE-Select" id="ENST00000219139.8">
    <property type="protein sequence ID" value="ENSP00000219139.3"/>
    <property type="RefSeq nucleotide sequence ID" value="NM_025187.5"/>
    <property type="RefSeq protein sequence ID" value="NP_079463.2"/>
</dbReference>
<dbReference type="UCSC" id="uc002erc.4">
    <molecule id="Q9BSU1-1"/>
    <property type="organism name" value="human"/>
</dbReference>
<dbReference type="AGR" id="HGNC:29564"/>
<dbReference type="CTD" id="80262"/>
<dbReference type="DisGeNET" id="80262"/>
<dbReference type="GeneCards" id="PHAF1"/>
<dbReference type="HGNC" id="HGNC:29564">
    <property type="gene designation" value="PHAF1"/>
</dbReference>
<dbReference type="HPA" id="ENSG00000125149">
    <property type="expression patterns" value="Tissue enhanced (liver)"/>
</dbReference>
<dbReference type="neXtProt" id="NX_Q9BSU1"/>
<dbReference type="OpenTargets" id="ENSG00000125149"/>
<dbReference type="VEuPathDB" id="HostDB:ENSG00000125149"/>
<dbReference type="eggNOG" id="KOG2819">
    <property type="taxonomic scope" value="Eukaryota"/>
</dbReference>
<dbReference type="GeneTree" id="ENSGT00940000153528"/>
<dbReference type="InParanoid" id="Q9BSU1"/>
<dbReference type="OMA" id="YRKNDQK"/>
<dbReference type="OrthoDB" id="411211at2759"/>
<dbReference type="PAN-GO" id="Q9BSU1">
    <property type="GO annotations" value="4 GO annotations based on evolutionary models"/>
</dbReference>
<dbReference type="PhylomeDB" id="Q9BSU1"/>
<dbReference type="TreeFam" id="TF313669"/>
<dbReference type="PathwayCommons" id="Q9BSU1"/>
<dbReference type="SignaLink" id="Q9BSU1"/>
<dbReference type="BioGRID-ORCS" id="80262">
    <property type="hits" value="12 hits in 1130 CRISPR screens"/>
</dbReference>
<dbReference type="ChiTaRS" id="C16orf70">
    <property type="organism name" value="human"/>
</dbReference>
<dbReference type="GenomeRNAi" id="80262"/>
<dbReference type="Pharos" id="Q9BSU1">
    <property type="development level" value="Tdark"/>
</dbReference>
<dbReference type="PRO" id="PR:Q9BSU1"/>
<dbReference type="Proteomes" id="UP000005640">
    <property type="component" value="Chromosome 16"/>
</dbReference>
<dbReference type="RNAct" id="Q9BSU1">
    <property type="molecule type" value="protein"/>
</dbReference>
<dbReference type="Bgee" id="ENSG00000125149">
    <property type="expression patterns" value="Expressed in right lobe of liver and 174 other cell types or tissues"/>
</dbReference>
<dbReference type="ExpressionAtlas" id="Q9BSU1">
    <property type="expression patterns" value="baseline and differential"/>
</dbReference>
<dbReference type="GO" id="GO:0030425">
    <property type="term" value="C:dendrite"/>
    <property type="evidence" value="ECO:0000318"/>
    <property type="project" value="GO_Central"/>
</dbReference>
<dbReference type="GO" id="GO:0000407">
    <property type="term" value="C:phagophore assembly site"/>
    <property type="evidence" value="ECO:0000314"/>
    <property type="project" value="UniProtKB"/>
</dbReference>
<dbReference type="GO" id="GO:0030672">
    <property type="term" value="C:synaptic vesicle membrane"/>
    <property type="evidence" value="ECO:0000318"/>
    <property type="project" value="GO_Central"/>
</dbReference>
<dbReference type="GO" id="GO:0005802">
    <property type="term" value="C:trans-Golgi network"/>
    <property type="evidence" value="ECO:0000318"/>
    <property type="project" value="GO_Central"/>
</dbReference>
<dbReference type="GO" id="GO:0043001">
    <property type="term" value="P:Golgi to plasma membrane protein transport"/>
    <property type="evidence" value="ECO:0000318"/>
    <property type="project" value="GO_Central"/>
</dbReference>
<dbReference type="InterPro" id="IPR005373">
    <property type="entry name" value="PHAF1"/>
</dbReference>
<dbReference type="InterPro" id="IPR039156">
    <property type="entry name" value="PHAF1/BROMI"/>
</dbReference>
<dbReference type="PANTHER" id="PTHR13465:SF2">
    <property type="entry name" value="PHAGOSOME ASSEMBLY FACTOR 1"/>
    <property type="match status" value="1"/>
</dbReference>
<dbReference type="PANTHER" id="PTHR13465">
    <property type="entry name" value="UPF0183 PROTEIN"/>
    <property type="match status" value="1"/>
</dbReference>
<dbReference type="Pfam" id="PF03676">
    <property type="entry name" value="PHAF1"/>
    <property type="match status" value="1"/>
</dbReference>
<accession>Q9BSU1</accession>
<accession>Q9HA86</accession>